<sequence>MKPNYSVNTSPKRSDEPIWWGLFGAGGTWFAMLTPITVLVLGILVPLGVIDAEAMSYERVSAFATSIIGALFIIGTLALPMWHAMHRVHHGMHDLKFHTGVIGKVACYAFAGLITALAVIFIFMI</sequence>
<proteinExistence type="inferred from homology"/>
<evidence type="ECO:0000255" key="1">
    <source>
        <dbReference type="HAMAP-Rule" id="MF_00709"/>
    </source>
</evidence>
<dbReference type="EMBL" id="BA000031">
    <property type="protein sequence ID" value="BAC61106.1"/>
    <property type="molecule type" value="Genomic_DNA"/>
</dbReference>
<dbReference type="RefSeq" id="NP_799222.1">
    <property type="nucleotide sequence ID" value="NC_004603.1"/>
</dbReference>
<dbReference type="RefSeq" id="WP_005456924.1">
    <property type="nucleotide sequence ID" value="NC_004603.1"/>
</dbReference>
<dbReference type="SMR" id="Q87KY1"/>
<dbReference type="GeneID" id="1190406"/>
<dbReference type="KEGG" id="vpa:VP2843"/>
<dbReference type="PATRIC" id="fig|223926.6.peg.2735"/>
<dbReference type="eggNOG" id="COG3080">
    <property type="taxonomic scope" value="Bacteria"/>
</dbReference>
<dbReference type="HOGENOM" id="CLU_168367_0_0_6"/>
<dbReference type="Proteomes" id="UP000002493">
    <property type="component" value="Chromosome 1"/>
</dbReference>
<dbReference type="GO" id="GO:0045283">
    <property type="term" value="C:fumarate reductase complex"/>
    <property type="evidence" value="ECO:0007669"/>
    <property type="project" value="UniProtKB-UniRule"/>
</dbReference>
<dbReference type="GO" id="GO:0005886">
    <property type="term" value="C:plasma membrane"/>
    <property type="evidence" value="ECO:0007669"/>
    <property type="project" value="UniProtKB-SubCell"/>
</dbReference>
<dbReference type="GO" id="GO:0000104">
    <property type="term" value="F:succinate dehydrogenase activity"/>
    <property type="evidence" value="ECO:0007669"/>
    <property type="project" value="UniProtKB-UniRule"/>
</dbReference>
<dbReference type="GO" id="GO:0006106">
    <property type="term" value="P:fumarate metabolic process"/>
    <property type="evidence" value="ECO:0007669"/>
    <property type="project" value="InterPro"/>
</dbReference>
<dbReference type="CDD" id="cd00547">
    <property type="entry name" value="QFR_TypeD_subunitD"/>
    <property type="match status" value="1"/>
</dbReference>
<dbReference type="Gene3D" id="1.20.1300.10">
    <property type="entry name" value="Fumarate reductase/succinate dehydrogenase, transmembrane subunit"/>
    <property type="match status" value="1"/>
</dbReference>
<dbReference type="HAMAP" id="MF_00709">
    <property type="entry name" value="Fumarate_red_D"/>
    <property type="match status" value="1"/>
</dbReference>
<dbReference type="InterPro" id="IPR003418">
    <property type="entry name" value="Fumarate_red_D"/>
</dbReference>
<dbReference type="InterPro" id="IPR034804">
    <property type="entry name" value="SQR/QFR_C/D"/>
</dbReference>
<dbReference type="NCBIfam" id="NF003977">
    <property type="entry name" value="PRK05470.1-1"/>
    <property type="match status" value="1"/>
</dbReference>
<dbReference type="Pfam" id="PF02313">
    <property type="entry name" value="Fumarate_red_D"/>
    <property type="match status" value="1"/>
</dbReference>
<dbReference type="PIRSF" id="PIRSF000179">
    <property type="entry name" value="FrdD"/>
    <property type="match status" value="1"/>
</dbReference>
<dbReference type="SUPFAM" id="SSF81343">
    <property type="entry name" value="Fumarate reductase respiratory complex transmembrane subunits"/>
    <property type="match status" value="1"/>
</dbReference>
<gene>
    <name evidence="1" type="primary">frdD</name>
    <name type="ordered locus">VP2843</name>
</gene>
<comment type="function">
    <text evidence="1">Anchors the catalytic components of the fumarate reductase complex to the cell membrane, binds quinones.</text>
</comment>
<comment type="subunit">
    <text evidence="1">Part of an enzyme complex containing four subunits: a flavoprotein (FrdA), an iron-sulfur protein (FrdB), and two hydrophobic anchor proteins (FrdC and FrdD).</text>
</comment>
<comment type="subcellular location">
    <subcellularLocation>
        <location evidence="1">Cell inner membrane</location>
        <topology evidence="1">Multi-pass membrane protein</topology>
    </subcellularLocation>
</comment>
<comment type="similarity">
    <text evidence="1">Belongs to the FrdD family.</text>
</comment>
<accession>Q87KY1</accession>
<keyword id="KW-0997">Cell inner membrane</keyword>
<keyword id="KW-1003">Cell membrane</keyword>
<keyword id="KW-0472">Membrane</keyword>
<keyword id="KW-0812">Transmembrane</keyword>
<keyword id="KW-1133">Transmembrane helix</keyword>
<reference key="1">
    <citation type="journal article" date="2003" name="Lancet">
        <title>Genome sequence of Vibrio parahaemolyticus: a pathogenic mechanism distinct from that of V. cholerae.</title>
        <authorList>
            <person name="Makino K."/>
            <person name="Oshima K."/>
            <person name="Kurokawa K."/>
            <person name="Yokoyama K."/>
            <person name="Uda T."/>
            <person name="Tagomori K."/>
            <person name="Iijima Y."/>
            <person name="Najima M."/>
            <person name="Nakano M."/>
            <person name="Yamashita A."/>
            <person name="Kubota Y."/>
            <person name="Kimura S."/>
            <person name="Yasunaga T."/>
            <person name="Honda T."/>
            <person name="Shinagawa H."/>
            <person name="Hattori M."/>
            <person name="Iida T."/>
        </authorList>
    </citation>
    <scope>NUCLEOTIDE SEQUENCE [LARGE SCALE GENOMIC DNA]</scope>
    <source>
        <strain>RIMD 2210633</strain>
    </source>
</reference>
<organism>
    <name type="scientific">Vibrio parahaemolyticus serotype O3:K6 (strain RIMD 2210633)</name>
    <dbReference type="NCBI Taxonomy" id="223926"/>
    <lineage>
        <taxon>Bacteria</taxon>
        <taxon>Pseudomonadati</taxon>
        <taxon>Pseudomonadota</taxon>
        <taxon>Gammaproteobacteria</taxon>
        <taxon>Vibrionales</taxon>
        <taxon>Vibrionaceae</taxon>
        <taxon>Vibrio</taxon>
    </lineage>
</organism>
<protein>
    <recommendedName>
        <fullName evidence="1">Fumarate reductase subunit D</fullName>
    </recommendedName>
    <alternativeName>
        <fullName evidence="1">Quinol-fumarate reductase subunit D</fullName>
        <shortName evidence="1">QFR subunit D</shortName>
    </alternativeName>
</protein>
<name>FRDD_VIBPA</name>
<feature type="chain" id="PRO_0000196555" description="Fumarate reductase subunit D">
    <location>
        <begin position="1"/>
        <end position="125"/>
    </location>
</feature>
<feature type="transmembrane region" description="Helical" evidence="1">
    <location>
        <begin position="30"/>
        <end position="50"/>
    </location>
</feature>
<feature type="transmembrane region" description="Helical" evidence="1">
    <location>
        <begin position="62"/>
        <end position="82"/>
    </location>
</feature>
<feature type="transmembrane region" description="Helical" evidence="1">
    <location>
        <begin position="105"/>
        <end position="125"/>
    </location>
</feature>